<sequence length="301" mass="33003">MVRTDRDRWDLATSVGATATMVAAQRALAADPQYALIDDPYAAPLVRAVDIDVYTRLVNGQIPVDVESGFDPARMPEAMACRTRFYDQFFVDATRSGISQVVILASGLDARAYRLGWPAGTVVHEVDMPQVIEFKTLTLADLGAKPTAERRTVAVDLRDDWAAVLQAAGFDKDVPSAWSAEGLLVYLPDDAQGALFDNVTALSATGSRLAFEFVPDTAVFNDERWRSHHARMSELGFEIDFNDLVYHGQRSHVIDHLARDGWQSASHTAKELHAANGLDYPDDDIAAVFADITYTSAVLGR</sequence>
<keyword id="KW-0489">Methyltransferase</keyword>
<keyword id="KW-0949">S-adenosyl-L-methionine</keyword>
<keyword id="KW-0808">Transferase</keyword>
<protein>
    <recommendedName>
        <fullName>Putative S-adenosyl-L-methionine-dependent methyltransferase MUL_0450</fullName>
        <ecNumber>2.1.1.-</ecNumber>
    </recommendedName>
</protein>
<reference key="1">
    <citation type="journal article" date="2007" name="Genome Res.">
        <title>Reductive evolution and niche adaptation inferred from the genome of Mycobacterium ulcerans, the causative agent of Buruli ulcer.</title>
        <authorList>
            <person name="Stinear T.P."/>
            <person name="Seemann T."/>
            <person name="Pidot S."/>
            <person name="Frigui W."/>
            <person name="Reysset G."/>
            <person name="Garnier T."/>
            <person name="Meurice G."/>
            <person name="Simon D."/>
            <person name="Bouchier C."/>
            <person name="Ma L."/>
            <person name="Tichit M."/>
            <person name="Porter J.L."/>
            <person name="Ryan J."/>
            <person name="Johnson P.D.R."/>
            <person name="Davies J.K."/>
            <person name="Jenkin G.A."/>
            <person name="Small P.L.C."/>
            <person name="Jones L.M."/>
            <person name="Tekaia F."/>
            <person name="Laval F."/>
            <person name="Daffe M."/>
            <person name="Parkhill J."/>
            <person name="Cole S.T."/>
        </authorList>
    </citation>
    <scope>NUCLEOTIDE SEQUENCE [LARGE SCALE GENOMIC DNA]</scope>
    <source>
        <strain>Agy99</strain>
    </source>
</reference>
<name>Y450_MYCUA</name>
<organism>
    <name type="scientific">Mycobacterium ulcerans (strain Agy99)</name>
    <dbReference type="NCBI Taxonomy" id="362242"/>
    <lineage>
        <taxon>Bacteria</taxon>
        <taxon>Bacillati</taxon>
        <taxon>Actinomycetota</taxon>
        <taxon>Actinomycetes</taxon>
        <taxon>Mycobacteriales</taxon>
        <taxon>Mycobacteriaceae</taxon>
        <taxon>Mycobacterium</taxon>
        <taxon>Mycobacterium ulcerans group</taxon>
    </lineage>
</organism>
<feature type="chain" id="PRO_0000361249" description="Putative S-adenosyl-L-methionine-dependent methyltransferase MUL_0450">
    <location>
        <begin position="1"/>
        <end position="301"/>
    </location>
</feature>
<feature type="binding site" evidence="1">
    <location>
        <position position="127"/>
    </location>
    <ligand>
        <name>S-adenosyl-L-methionine</name>
        <dbReference type="ChEBI" id="CHEBI:59789"/>
    </ligand>
</feature>
<feature type="binding site" evidence="1">
    <location>
        <begin position="156"/>
        <end position="157"/>
    </location>
    <ligand>
        <name>S-adenosyl-L-methionine</name>
        <dbReference type="ChEBI" id="CHEBI:59789"/>
    </ligand>
</feature>
<evidence type="ECO:0000250" key="1"/>
<evidence type="ECO:0000305" key="2"/>
<dbReference type="EC" id="2.1.1.-"/>
<dbReference type="EMBL" id="CP000325">
    <property type="protein sequence ID" value="ABL03157.1"/>
    <property type="molecule type" value="Genomic_DNA"/>
</dbReference>
<dbReference type="RefSeq" id="WP_011738782.1">
    <property type="nucleotide sequence ID" value="NC_008611.1"/>
</dbReference>
<dbReference type="SMR" id="A0PLD8"/>
<dbReference type="KEGG" id="mul:MUL_0450"/>
<dbReference type="eggNOG" id="COG3315">
    <property type="taxonomic scope" value="Bacteria"/>
</dbReference>
<dbReference type="HOGENOM" id="CLU_056160_2_1_11"/>
<dbReference type="Proteomes" id="UP000000765">
    <property type="component" value="Chromosome"/>
</dbReference>
<dbReference type="GO" id="GO:0008168">
    <property type="term" value="F:methyltransferase activity"/>
    <property type="evidence" value="ECO:0007669"/>
    <property type="project" value="UniProtKB-KW"/>
</dbReference>
<dbReference type="GO" id="GO:0032259">
    <property type="term" value="P:methylation"/>
    <property type="evidence" value="ECO:0007669"/>
    <property type="project" value="UniProtKB-KW"/>
</dbReference>
<dbReference type="FunFam" id="3.40.50.150:FF:000152">
    <property type="entry name" value="S-adenosyl-L-methionine-dependent methyltransferase"/>
    <property type="match status" value="1"/>
</dbReference>
<dbReference type="Gene3D" id="3.40.50.150">
    <property type="entry name" value="Vaccinia Virus protein VP39"/>
    <property type="match status" value="1"/>
</dbReference>
<dbReference type="InterPro" id="IPR007213">
    <property type="entry name" value="Ppm1/Ppm2/Tcmp"/>
</dbReference>
<dbReference type="InterPro" id="IPR029063">
    <property type="entry name" value="SAM-dependent_MTases_sf"/>
</dbReference>
<dbReference type="InterPro" id="IPR011610">
    <property type="entry name" value="SAM_mthyl_Trfase_ML2640-like"/>
</dbReference>
<dbReference type="NCBIfam" id="TIGR00027">
    <property type="entry name" value="mthyl_TIGR00027"/>
    <property type="match status" value="1"/>
</dbReference>
<dbReference type="PANTHER" id="PTHR43619">
    <property type="entry name" value="S-ADENOSYL-L-METHIONINE-DEPENDENT METHYLTRANSFERASE YKTD-RELATED"/>
    <property type="match status" value="1"/>
</dbReference>
<dbReference type="PANTHER" id="PTHR43619:SF2">
    <property type="entry name" value="S-ADENOSYL-L-METHIONINE-DEPENDENT METHYLTRANSFERASES SUPERFAMILY PROTEIN"/>
    <property type="match status" value="1"/>
</dbReference>
<dbReference type="Pfam" id="PF04072">
    <property type="entry name" value="LCM"/>
    <property type="match status" value="1"/>
</dbReference>
<dbReference type="SUPFAM" id="SSF53335">
    <property type="entry name" value="S-adenosyl-L-methionine-dependent methyltransferases"/>
    <property type="match status" value="1"/>
</dbReference>
<comment type="function">
    <text evidence="1">Exhibits S-adenosyl-L-methionine-dependent methyltransferase activity.</text>
</comment>
<comment type="similarity">
    <text evidence="2">Belongs to the UPF0677 family.</text>
</comment>
<proteinExistence type="inferred from homology"/>
<gene>
    <name type="ordered locus">MUL_0450</name>
</gene>
<accession>A0PLD8</accession>